<evidence type="ECO:0000255" key="1">
    <source>
        <dbReference type="HAMAP-Rule" id="MF_00580"/>
    </source>
</evidence>
<keyword id="KW-0143">Chaperone</keyword>
<keyword id="KW-0963">Cytoplasm</keyword>
<comment type="function">
    <text evidence="1">Together with the chaperonin GroEL, plays an essential role in assisting protein folding. The GroEL-GroES system forms a nano-cage that allows encapsulation of the non-native substrate proteins and provides a physical environment optimized to promote and accelerate protein folding. GroES binds to the apical surface of the GroEL ring, thereby capping the opening of the GroEL channel.</text>
</comment>
<comment type="subunit">
    <text evidence="1">Heptamer of 7 subunits arranged in a ring. Interacts with the chaperonin GroEL.</text>
</comment>
<comment type="subcellular location">
    <subcellularLocation>
        <location evidence="1">Cytoplasm</location>
    </subcellularLocation>
</comment>
<comment type="similarity">
    <text evidence="1">Belongs to the GroES chaperonin family.</text>
</comment>
<proteinExistence type="inferred from homology"/>
<reference key="1">
    <citation type="journal article" date="2010" name="Genome Biol.">
        <title>Structure and dynamics of the pan-genome of Streptococcus pneumoniae and closely related species.</title>
        <authorList>
            <person name="Donati C."/>
            <person name="Hiller N.L."/>
            <person name="Tettelin H."/>
            <person name="Muzzi A."/>
            <person name="Croucher N.J."/>
            <person name="Angiuoli S.V."/>
            <person name="Oggioni M."/>
            <person name="Dunning Hotopp J.C."/>
            <person name="Hu F.Z."/>
            <person name="Riley D.R."/>
            <person name="Covacci A."/>
            <person name="Mitchell T.J."/>
            <person name="Bentley S.D."/>
            <person name="Kilian M."/>
            <person name="Ehrlich G.D."/>
            <person name="Rappuoli R."/>
            <person name="Moxon E.R."/>
            <person name="Masignani V."/>
        </authorList>
    </citation>
    <scope>NUCLEOTIDE SEQUENCE [LARGE SCALE GENOMIC DNA]</scope>
    <source>
        <strain>Hungary19A-6</strain>
    </source>
</reference>
<gene>
    <name evidence="1" type="primary">groES</name>
    <name evidence="1" type="synonym">groS</name>
    <name type="ordered locus">SPH_2051</name>
</gene>
<protein>
    <recommendedName>
        <fullName evidence="1">Co-chaperonin GroES</fullName>
    </recommendedName>
    <alternativeName>
        <fullName evidence="1">10 kDa chaperonin</fullName>
    </alternativeName>
    <alternativeName>
        <fullName evidence="1">Chaperonin-10</fullName>
        <shortName evidence="1">Cpn10</shortName>
    </alternativeName>
</protein>
<dbReference type="EMBL" id="CP000936">
    <property type="protein sequence ID" value="ACA36527.1"/>
    <property type="molecule type" value="Genomic_DNA"/>
</dbReference>
<dbReference type="RefSeq" id="WP_000917330.1">
    <property type="nucleotide sequence ID" value="NC_010380.1"/>
</dbReference>
<dbReference type="SMR" id="B1I8B3"/>
<dbReference type="GeneID" id="45652868"/>
<dbReference type="KEGG" id="spv:SPH_2051"/>
<dbReference type="HOGENOM" id="CLU_132825_1_2_9"/>
<dbReference type="Proteomes" id="UP000002163">
    <property type="component" value="Chromosome"/>
</dbReference>
<dbReference type="GO" id="GO:0005737">
    <property type="term" value="C:cytoplasm"/>
    <property type="evidence" value="ECO:0007669"/>
    <property type="project" value="UniProtKB-SubCell"/>
</dbReference>
<dbReference type="GO" id="GO:0005524">
    <property type="term" value="F:ATP binding"/>
    <property type="evidence" value="ECO:0007669"/>
    <property type="project" value="InterPro"/>
</dbReference>
<dbReference type="GO" id="GO:0046872">
    <property type="term" value="F:metal ion binding"/>
    <property type="evidence" value="ECO:0007669"/>
    <property type="project" value="TreeGrafter"/>
</dbReference>
<dbReference type="GO" id="GO:0044183">
    <property type="term" value="F:protein folding chaperone"/>
    <property type="evidence" value="ECO:0007669"/>
    <property type="project" value="InterPro"/>
</dbReference>
<dbReference type="GO" id="GO:0051087">
    <property type="term" value="F:protein-folding chaperone binding"/>
    <property type="evidence" value="ECO:0007669"/>
    <property type="project" value="TreeGrafter"/>
</dbReference>
<dbReference type="GO" id="GO:0051082">
    <property type="term" value="F:unfolded protein binding"/>
    <property type="evidence" value="ECO:0007669"/>
    <property type="project" value="TreeGrafter"/>
</dbReference>
<dbReference type="GO" id="GO:0051085">
    <property type="term" value="P:chaperone cofactor-dependent protein refolding"/>
    <property type="evidence" value="ECO:0007669"/>
    <property type="project" value="TreeGrafter"/>
</dbReference>
<dbReference type="CDD" id="cd00320">
    <property type="entry name" value="cpn10"/>
    <property type="match status" value="1"/>
</dbReference>
<dbReference type="FunFam" id="2.30.33.40:FF:000007">
    <property type="entry name" value="10 kDa chaperonin"/>
    <property type="match status" value="1"/>
</dbReference>
<dbReference type="Gene3D" id="2.30.33.40">
    <property type="entry name" value="GroES chaperonin"/>
    <property type="match status" value="1"/>
</dbReference>
<dbReference type="HAMAP" id="MF_00580">
    <property type="entry name" value="CH10"/>
    <property type="match status" value="1"/>
</dbReference>
<dbReference type="InterPro" id="IPR020818">
    <property type="entry name" value="Chaperonin_GroES"/>
</dbReference>
<dbReference type="InterPro" id="IPR037124">
    <property type="entry name" value="Chaperonin_GroES_sf"/>
</dbReference>
<dbReference type="InterPro" id="IPR018369">
    <property type="entry name" value="Chaprnonin_Cpn10_CS"/>
</dbReference>
<dbReference type="InterPro" id="IPR011032">
    <property type="entry name" value="GroES-like_sf"/>
</dbReference>
<dbReference type="NCBIfam" id="NF001528">
    <property type="entry name" value="PRK00364.1-4"/>
    <property type="match status" value="1"/>
</dbReference>
<dbReference type="PANTHER" id="PTHR10772">
    <property type="entry name" value="10 KDA HEAT SHOCK PROTEIN"/>
    <property type="match status" value="1"/>
</dbReference>
<dbReference type="PANTHER" id="PTHR10772:SF58">
    <property type="entry name" value="CO-CHAPERONIN GROES"/>
    <property type="match status" value="1"/>
</dbReference>
<dbReference type="Pfam" id="PF00166">
    <property type="entry name" value="Cpn10"/>
    <property type="match status" value="1"/>
</dbReference>
<dbReference type="PRINTS" id="PR00297">
    <property type="entry name" value="CHAPERONIN10"/>
</dbReference>
<dbReference type="SMART" id="SM00883">
    <property type="entry name" value="Cpn10"/>
    <property type="match status" value="1"/>
</dbReference>
<dbReference type="SUPFAM" id="SSF50129">
    <property type="entry name" value="GroES-like"/>
    <property type="match status" value="1"/>
</dbReference>
<dbReference type="PROSITE" id="PS00681">
    <property type="entry name" value="CHAPERONINS_CPN10"/>
    <property type="match status" value="1"/>
</dbReference>
<organism>
    <name type="scientific">Streptococcus pneumoniae (strain Hungary19A-6)</name>
    <dbReference type="NCBI Taxonomy" id="487214"/>
    <lineage>
        <taxon>Bacteria</taxon>
        <taxon>Bacillati</taxon>
        <taxon>Bacillota</taxon>
        <taxon>Bacilli</taxon>
        <taxon>Lactobacillales</taxon>
        <taxon>Streptococcaceae</taxon>
        <taxon>Streptococcus</taxon>
    </lineage>
</organism>
<sequence>MLKPLGDRVVLKIEEKEQTVGGFVLAGSAQEKTKTAQVVATGQGVRTLNGDLVAPSVKTGDRVLVEAHAGLDVKDGDEKYIIVGEANILAIIEE</sequence>
<accession>B1I8B3</accession>
<feature type="chain" id="PRO_1000129713" description="Co-chaperonin GroES">
    <location>
        <begin position="1"/>
        <end position="94"/>
    </location>
</feature>
<name>CH10_STRPI</name>